<evidence type="ECO:0000250" key="1"/>
<evidence type="ECO:0000250" key="2">
    <source>
        <dbReference type="UniProtKB" id="P07750"/>
    </source>
</evidence>
<evidence type="ECO:0000255" key="3"/>
<evidence type="ECO:0000305" key="4"/>
<protein>
    <recommendedName>
        <fullName>Interleukin-4</fullName>
        <shortName>IL-4</shortName>
    </recommendedName>
    <alternativeName>
        <fullName>B-cell stimulatory factor 1</fullName>
        <shortName>BSF-1</shortName>
    </alternativeName>
    <alternativeName>
        <fullName>Lymphocyte stimulatory factor 1</fullName>
    </alternativeName>
</protein>
<accession>Q9MZR8</accession>
<accession>Q0MS70</accession>
<organism>
    <name type="scientific">Oryctolagus cuniculus</name>
    <name type="common">Rabbit</name>
    <dbReference type="NCBI Taxonomy" id="9986"/>
    <lineage>
        <taxon>Eukaryota</taxon>
        <taxon>Metazoa</taxon>
        <taxon>Chordata</taxon>
        <taxon>Craniata</taxon>
        <taxon>Vertebrata</taxon>
        <taxon>Euteleostomi</taxon>
        <taxon>Mammalia</taxon>
        <taxon>Eutheria</taxon>
        <taxon>Euarchontoglires</taxon>
        <taxon>Glires</taxon>
        <taxon>Lagomorpha</taxon>
        <taxon>Leporidae</taxon>
        <taxon>Oryctolagus</taxon>
    </lineage>
</organism>
<reference key="1">
    <citation type="journal article" date="2000" name="Cytokine">
        <title>The complete cDNA sequences of IL-2, IL-4, IL-6 and IL-10 from the European rabbit (Oryctolagus cuniculus).</title>
        <authorList>
            <person name="Perkins H.D."/>
            <person name="van Leeuwen B.H."/>
            <person name="Hardy C.M."/>
            <person name="Kerr P.J."/>
        </authorList>
    </citation>
    <scope>NUCLEOTIDE SEQUENCE [MRNA]</scope>
    <source>
        <tissue>Spleen</tissue>
    </source>
</reference>
<reference key="2">
    <citation type="submission" date="2006-07" db="EMBL/GenBank/DDBJ databases">
        <title>Cloning and sequence analysis of IL-4 gene in rabbit.</title>
        <authorList>
            <person name="Huang D."/>
            <person name="Yang G."/>
            <person name="Gu X."/>
            <person name="Hao G."/>
            <person name="Wu K."/>
            <person name="Zhang X."/>
            <person name="Liu D."/>
            <person name="Jia X."/>
            <person name="Yang C."/>
        </authorList>
    </citation>
    <scope>NUCLEOTIDE SEQUENCE [MRNA]</scope>
</reference>
<sequence length="147" mass="16562">MGLPAQLPVTLLCLLAGTAHFIQGRRGDIILPEVIKTLNILTERKTPCTKLMIADALAVPKNTTEREAVCRAATALRQFYLHHKVSWCFKEHGELGDLRLLRGLDRNLCSMAKLSNCPGKEARQTTLEDFLDRLKTAMQEKYSKRQS</sequence>
<proteinExistence type="evidence at transcript level"/>
<name>IL4_RABIT</name>
<comment type="function">
    <text evidence="2">Participates in at least several B-cell activation processes as well as of other cell types. It is a costimulator of DNA-synthesis. It induces the expression of class II MHC molecules on resting B-cells. It enhances both secretion and cell surface expression of IgE and IgG1. It also regulates the expression of the low affinity Fc receptor for IgE (CD23) on both lymphocytes and monocytes. Positively regulates IL31RA expression in macrophages. Stimulates autophagy in dendritic cells by interfering with mTORC1 signaling and through the induction of RUFY4.</text>
</comment>
<comment type="subcellular location">
    <subcellularLocation>
        <location>Secreted</location>
    </subcellularLocation>
</comment>
<comment type="similarity">
    <text evidence="4">Belongs to the IL-4/IL-13 family.</text>
</comment>
<feature type="signal peptide" evidence="3">
    <location>
        <begin position="1"/>
        <end position="24"/>
    </location>
</feature>
<feature type="chain" id="PRO_0000042272" description="Interleukin-4">
    <location>
        <begin position="25"/>
        <end position="147"/>
    </location>
</feature>
<feature type="glycosylation site" description="N-linked (GlcNAc...) asparagine" evidence="3">
    <location>
        <position position="62"/>
    </location>
</feature>
<feature type="disulfide bond" evidence="1">
    <location>
        <begin position="48"/>
        <end position="88"/>
    </location>
</feature>
<keyword id="KW-0075">B-cell activation</keyword>
<keyword id="KW-0202">Cytokine</keyword>
<keyword id="KW-1015">Disulfide bond</keyword>
<keyword id="KW-0325">Glycoprotein</keyword>
<keyword id="KW-0339">Growth factor</keyword>
<keyword id="KW-1185">Reference proteome</keyword>
<keyword id="KW-0964">Secreted</keyword>
<keyword id="KW-0732">Signal</keyword>
<dbReference type="EMBL" id="AF169169">
    <property type="protein sequence ID" value="AAF86653.1"/>
    <property type="molecule type" value="mRNA"/>
</dbReference>
<dbReference type="EMBL" id="DQ852343">
    <property type="protein sequence ID" value="ABH10828.1"/>
    <property type="molecule type" value="mRNA"/>
</dbReference>
<dbReference type="RefSeq" id="NP_001156649.1">
    <property type="nucleotide sequence ID" value="NM_001163177.1"/>
</dbReference>
<dbReference type="SMR" id="Q9MZR8"/>
<dbReference type="FunCoup" id="Q9MZR8">
    <property type="interactions" value="30"/>
</dbReference>
<dbReference type="STRING" id="9986.ENSOCUP00000025135"/>
<dbReference type="GlyCosmos" id="Q9MZR8">
    <property type="glycosylation" value="1 site, No reported glycans"/>
</dbReference>
<dbReference type="PaxDb" id="9986-ENSOCUP00000025135"/>
<dbReference type="GeneID" id="100302454"/>
<dbReference type="KEGG" id="ocu:100302454"/>
<dbReference type="CTD" id="3565"/>
<dbReference type="eggNOG" id="KOG3886">
    <property type="taxonomic scope" value="Eukaryota"/>
</dbReference>
<dbReference type="InParanoid" id="Q9MZR8"/>
<dbReference type="OrthoDB" id="9528087at2759"/>
<dbReference type="Proteomes" id="UP000001811">
    <property type="component" value="Unplaced"/>
</dbReference>
<dbReference type="GO" id="GO:0005615">
    <property type="term" value="C:extracellular space"/>
    <property type="evidence" value="ECO:0007669"/>
    <property type="project" value="UniProtKB-KW"/>
</dbReference>
<dbReference type="GO" id="GO:0005125">
    <property type="term" value="F:cytokine activity"/>
    <property type="evidence" value="ECO:0007669"/>
    <property type="project" value="UniProtKB-KW"/>
</dbReference>
<dbReference type="GO" id="GO:0008083">
    <property type="term" value="F:growth factor activity"/>
    <property type="evidence" value="ECO:0007669"/>
    <property type="project" value="UniProtKB-KW"/>
</dbReference>
<dbReference type="GO" id="GO:0005136">
    <property type="term" value="F:interleukin-4 receptor binding"/>
    <property type="evidence" value="ECO:0007669"/>
    <property type="project" value="InterPro"/>
</dbReference>
<dbReference type="GO" id="GO:0042113">
    <property type="term" value="P:B cell activation"/>
    <property type="evidence" value="ECO:0007669"/>
    <property type="project" value="UniProtKB-KW"/>
</dbReference>
<dbReference type="GO" id="GO:0006955">
    <property type="term" value="P:immune response"/>
    <property type="evidence" value="ECO:0007669"/>
    <property type="project" value="InterPro"/>
</dbReference>
<dbReference type="GO" id="GO:0035771">
    <property type="term" value="P:interleukin-4-mediated signaling pathway"/>
    <property type="evidence" value="ECO:0007669"/>
    <property type="project" value="TreeGrafter"/>
</dbReference>
<dbReference type="GO" id="GO:0050728">
    <property type="term" value="P:negative regulation of inflammatory response"/>
    <property type="evidence" value="ECO:0007669"/>
    <property type="project" value="TreeGrafter"/>
</dbReference>
<dbReference type="GO" id="GO:0045893">
    <property type="term" value="P:positive regulation of DNA-templated transcription"/>
    <property type="evidence" value="ECO:0007669"/>
    <property type="project" value="TreeGrafter"/>
</dbReference>
<dbReference type="GO" id="GO:0016239">
    <property type="term" value="P:positive regulation of macroautophagy"/>
    <property type="evidence" value="ECO:0000250"/>
    <property type="project" value="UniProtKB"/>
</dbReference>
<dbReference type="GO" id="GO:0050776">
    <property type="term" value="P:regulation of immune response"/>
    <property type="evidence" value="ECO:0007669"/>
    <property type="project" value="TreeGrafter"/>
</dbReference>
<dbReference type="FunFam" id="1.20.1250.10:FF:000014">
    <property type="entry name" value="Interleukin-4"/>
    <property type="match status" value="1"/>
</dbReference>
<dbReference type="Gene3D" id="1.20.1250.10">
    <property type="match status" value="1"/>
</dbReference>
<dbReference type="InterPro" id="IPR009079">
    <property type="entry name" value="4_helix_cytokine-like_core"/>
</dbReference>
<dbReference type="InterPro" id="IPR002354">
    <property type="entry name" value="IL-4"/>
</dbReference>
<dbReference type="InterPro" id="IPR001325">
    <property type="entry name" value="IL-4/IL-13"/>
</dbReference>
<dbReference type="InterPro" id="IPR018096">
    <property type="entry name" value="IL-4/IL-13_CS"/>
</dbReference>
<dbReference type="PANTHER" id="PTHR47401">
    <property type="entry name" value="INTERLEUKIN-4"/>
    <property type="match status" value="1"/>
</dbReference>
<dbReference type="PANTHER" id="PTHR47401:SF1">
    <property type="entry name" value="INTERLEUKIN-4"/>
    <property type="match status" value="1"/>
</dbReference>
<dbReference type="Pfam" id="PF00727">
    <property type="entry name" value="IL4"/>
    <property type="match status" value="1"/>
</dbReference>
<dbReference type="PIRSF" id="PIRSF001941">
    <property type="entry name" value="Interleukin_4"/>
    <property type="match status" value="1"/>
</dbReference>
<dbReference type="PRINTS" id="PR00431">
    <property type="entry name" value="INTERLEUKIN4"/>
</dbReference>
<dbReference type="SMART" id="SM00190">
    <property type="entry name" value="IL4_13"/>
    <property type="match status" value="1"/>
</dbReference>
<dbReference type="SUPFAM" id="SSF47266">
    <property type="entry name" value="4-helical cytokines"/>
    <property type="match status" value="1"/>
</dbReference>
<dbReference type="PROSITE" id="PS00838">
    <property type="entry name" value="INTERLEUKIN_4_13"/>
    <property type="match status" value="1"/>
</dbReference>
<gene>
    <name type="primary">IL4</name>
</gene>